<feature type="chain" id="PRO_0000157570" description="Large ribosomal subunit protein bL12">
    <location>
        <begin position="1"/>
        <end position="125"/>
    </location>
</feature>
<gene>
    <name evidence="1" type="primary">rplL</name>
    <name type="ordered locus">RP139</name>
</gene>
<sequence>MADLAKIEEQLSSLTLMQAAELVKMLEEKWGVSAAAPITVASAGVAAPLAEAVTEKTEFEVVLTATGDKKVEVIKIVKDITGLGLIEAKKLVDEAPKSIKNNVKKAEAEEIKSKLEAAGAKVELK</sequence>
<evidence type="ECO:0000255" key="1">
    <source>
        <dbReference type="HAMAP-Rule" id="MF_00368"/>
    </source>
</evidence>
<evidence type="ECO:0000305" key="2"/>
<name>RL7_RICPR</name>
<accession>Q9ZE21</accession>
<organism>
    <name type="scientific">Rickettsia prowazekii (strain Madrid E)</name>
    <dbReference type="NCBI Taxonomy" id="272947"/>
    <lineage>
        <taxon>Bacteria</taxon>
        <taxon>Pseudomonadati</taxon>
        <taxon>Pseudomonadota</taxon>
        <taxon>Alphaproteobacteria</taxon>
        <taxon>Rickettsiales</taxon>
        <taxon>Rickettsiaceae</taxon>
        <taxon>Rickettsieae</taxon>
        <taxon>Rickettsia</taxon>
        <taxon>typhus group</taxon>
    </lineage>
</organism>
<proteinExistence type="inferred from homology"/>
<keyword id="KW-1185">Reference proteome</keyword>
<keyword id="KW-0687">Ribonucleoprotein</keyword>
<keyword id="KW-0689">Ribosomal protein</keyword>
<reference key="1">
    <citation type="journal article" date="1998" name="Nature">
        <title>The genome sequence of Rickettsia prowazekii and the origin of mitochondria.</title>
        <authorList>
            <person name="Andersson S.G.E."/>
            <person name="Zomorodipour A."/>
            <person name="Andersson J.O."/>
            <person name="Sicheritz-Ponten T."/>
            <person name="Alsmark U.C.M."/>
            <person name="Podowski R.M."/>
            <person name="Naeslund A.K."/>
            <person name="Eriksson A.-S."/>
            <person name="Winkler H.H."/>
            <person name="Kurland C.G."/>
        </authorList>
    </citation>
    <scope>NUCLEOTIDE SEQUENCE [LARGE SCALE GENOMIC DNA]</scope>
    <source>
        <strain>Madrid E</strain>
    </source>
</reference>
<dbReference type="EMBL" id="AJ235270">
    <property type="protein sequence ID" value="CAA14607.1"/>
    <property type="molecule type" value="Genomic_DNA"/>
</dbReference>
<dbReference type="PIR" id="H71723">
    <property type="entry name" value="H71723"/>
</dbReference>
<dbReference type="RefSeq" id="NP_220530.1">
    <property type="nucleotide sequence ID" value="NC_000963.1"/>
</dbReference>
<dbReference type="RefSeq" id="WP_004597183.1">
    <property type="nucleotide sequence ID" value="NC_000963.1"/>
</dbReference>
<dbReference type="SMR" id="Q9ZE21"/>
<dbReference type="STRING" id="272947.gene:17555222"/>
<dbReference type="EnsemblBacteria" id="CAA14607">
    <property type="protein sequence ID" value="CAA14607"/>
    <property type="gene ID" value="CAA14607"/>
</dbReference>
<dbReference type="GeneID" id="57569267"/>
<dbReference type="KEGG" id="rpr:RP139"/>
<dbReference type="PATRIC" id="fig|272947.5.peg.140"/>
<dbReference type="eggNOG" id="COG0222">
    <property type="taxonomic scope" value="Bacteria"/>
</dbReference>
<dbReference type="HOGENOM" id="CLU_086499_3_0_5"/>
<dbReference type="OrthoDB" id="9811748at2"/>
<dbReference type="Proteomes" id="UP000002480">
    <property type="component" value="Chromosome"/>
</dbReference>
<dbReference type="GO" id="GO:0005737">
    <property type="term" value="C:cytoplasm"/>
    <property type="evidence" value="ECO:0007669"/>
    <property type="project" value="UniProtKB-ARBA"/>
</dbReference>
<dbReference type="GO" id="GO:1990904">
    <property type="term" value="C:ribonucleoprotein complex"/>
    <property type="evidence" value="ECO:0007669"/>
    <property type="project" value="UniProtKB-KW"/>
</dbReference>
<dbReference type="GO" id="GO:0005840">
    <property type="term" value="C:ribosome"/>
    <property type="evidence" value="ECO:0007669"/>
    <property type="project" value="UniProtKB-KW"/>
</dbReference>
<dbReference type="GO" id="GO:0003729">
    <property type="term" value="F:mRNA binding"/>
    <property type="evidence" value="ECO:0007669"/>
    <property type="project" value="TreeGrafter"/>
</dbReference>
<dbReference type="GO" id="GO:0003735">
    <property type="term" value="F:structural constituent of ribosome"/>
    <property type="evidence" value="ECO:0007669"/>
    <property type="project" value="InterPro"/>
</dbReference>
<dbReference type="GO" id="GO:0006412">
    <property type="term" value="P:translation"/>
    <property type="evidence" value="ECO:0007669"/>
    <property type="project" value="UniProtKB-UniRule"/>
</dbReference>
<dbReference type="CDD" id="cd00387">
    <property type="entry name" value="Ribosomal_L7_L12"/>
    <property type="match status" value="1"/>
</dbReference>
<dbReference type="FunFam" id="3.30.1390.10:FF:000001">
    <property type="entry name" value="50S ribosomal protein L7/L12"/>
    <property type="match status" value="1"/>
</dbReference>
<dbReference type="Gene3D" id="3.30.1390.10">
    <property type="match status" value="1"/>
</dbReference>
<dbReference type="Gene3D" id="1.20.5.710">
    <property type="entry name" value="Single helix bin"/>
    <property type="match status" value="1"/>
</dbReference>
<dbReference type="HAMAP" id="MF_00368">
    <property type="entry name" value="Ribosomal_bL12"/>
    <property type="match status" value="1"/>
</dbReference>
<dbReference type="InterPro" id="IPR000206">
    <property type="entry name" value="Ribosomal_bL12"/>
</dbReference>
<dbReference type="InterPro" id="IPR013823">
    <property type="entry name" value="Ribosomal_bL12_C"/>
</dbReference>
<dbReference type="InterPro" id="IPR014719">
    <property type="entry name" value="Ribosomal_bL12_C/ClpS-like"/>
</dbReference>
<dbReference type="InterPro" id="IPR008932">
    <property type="entry name" value="Ribosomal_bL12_oligo"/>
</dbReference>
<dbReference type="InterPro" id="IPR036235">
    <property type="entry name" value="Ribosomal_bL12_oligo_N_sf"/>
</dbReference>
<dbReference type="NCBIfam" id="TIGR00855">
    <property type="entry name" value="L12"/>
    <property type="match status" value="1"/>
</dbReference>
<dbReference type="PANTHER" id="PTHR45987">
    <property type="entry name" value="39S RIBOSOMAL PROTEIN L12"/>
    <property type="match status" value="1"/>
</dbReference>
<dbReference type="PANTHER" id="PTHR45987:SF4">
    <property type="entry name" value="LARGE RIBOSOMAL SUBUNIT PROTEIN BL12M"/>
    <property type="match status" value="1"/>
</dbReference>
<dbReference type="Pfam" id="PF00542">
    <property type="entry name" value="Ribosomal_L12"/>
    <property type="match status" value="1"/>
</dbReference>
<dbReference type="Pfam" id="PF16320">
    <property type="entry name" value="Ribosomal_L12_N"/>
    <property type="match status" value="1"/>
</dbReference>
<dbReference type="SUPFAM" id="SSF54736">
    <property type="entry name" value="ClpS-like"/>
    <property type="match status" value="1"/>
</dbReference>
<dbReference type="SUPFAM" id="SSF48300">
    <property type="entry name" value="Ribosomal protein L7/12, oligomerisation (N-terminal) domain"/>
    <property type="match status" value="1"/>
</dbReference>
<protein>
    <recommendedName>
        <fullName evidence="1">Large ribosomal subunit protein bL12</fullName>
    </recommendedName>
    <alternativeName>
        <fullName evidence="2">50S ribosomal protein L7/L12</fullName>
    </alternativeName>
</protein>
<comment type="function">
    <text evidence="1">Forms part of the ribosomal stalk which helps the ribosome interact with GTP-bound translation factors. Is thus essential for accurate translation.</text>
</comment>
<comment type="subunit">
    <text evidence="1">Homodimer. Part of the ribosomal stalk of the 50S ribosomal subunit. Forms a multimeric L10(L12)X complex, where L10 forms an elongated spine to which 2 to 4 L12 dimers bind in a sequential fashion. Binds GTP-bound translation factors.</text>
</comment>
<comment type="similarity">
    <text evidence="1">Belongs to the bacterial ribosomal protein bL12 family.</text>
</comment>